<proteinExistence type="inferred from homology"/>
<gene>
    <name evidence="1" type="primary">yciB</name>
    <name type="ordered locus">Mmc1_3451</name>
</gene>
<keyword id="KW-0997">Cell inner membrane</keyword>
<keyword id="KW-1003">Cell membrane</keyword>
<keyword id="KW-0472">Membrane</keyword>
<keyword id="KW-1185">Reference proteome</keyword>
<keyword id="KW-0812">Transmembrane</keyword>
<keyword id="KW-1133">Transmembrane helix</keyword>
<name>YCIB_MAGMM</name>
<protein>
    <recommendedName>
        <fullName evidence="1">Inner membrane-spanning protein YciB</fullName>
    </recommendedName>
</protein>
<accession>A0LD93</accession>
<evidence type="ECO:0000255" key="1">
    <source>
        <dbReference type="HAMAP-Rule" id="MF_00189"/>
    </source>
</evidence>
<dbReference type="EMBL" id="CP000471">
    <property type="protein sequence ID" value="ABK45936.1"/>
    <property type="molecule type" value="Genomic_DNA"/>
</dbReference>
<dbReference type="RefSeq" id="WP_011714992.1">
    <property type="nucleotide sequence ID" value="NC_008576.1"/>
</dbReference>
<dbReference type="STRING" id="156889.Mmc1_3451"/>
<dbReference type="KEGG" id="mgm:Mmc1_3451"/>
<dbReference type="eggNOG" id="COG2917">
    <property type="taxonomic scope" value="Bacteria"/>
</dbReference>
<dbReference type="HOGENOM" id="CLU_089554_2_0_5"/>
<dbReference type="OrthoDB" id="9788219at2"/>
<dbReference type="Proteomes" id="UP000002586">
    <property type="component" value="Chromosome"/>
</dbReference>
<dbReference type="GO" id="GO:0005886">
    <property type="term" value="C:plasma membrane"/>
    <property type="evidence" value="ECO:0007669"/>
    <property type="project" value="UniProtKB-SubCell"/>
</dbReference>
<dbReference type="HAMAP" id="MF_00189">
    <property type="entry name" value="YciB"/>
    <property type="match status" value="1"/>
</dbReference>
<dbReference type="InterPro" id="IPR006008">
    <property type="entry name" value="YciB"/>
</dbReference>
<dbReference type="NCBIfam" id="TIGR00997">
    <property type="entry name" value="ispZ"/>
    <property type="match status" value="1"/>
</dbReference>
<dbReference type="NCBIfam" id="NF001325">
    <property type="entry name" value="PRK00259.1-3"/>
    <property type="match status" value="1"/>
</dbReference>
<dbReference type="PANTHER" id="PTHR36917:SF1">
    <property type="entry name" value="INNER MEMBRANE-SPANNING PROTEIN YCIB"/>
    <property type="match status" value="1"/>
</dbReference>
<dbReference type="PANTHER" id="PTHR36917">
    <property type="entry name" value="INTRACELLULAR SEPTATION PROTEIN A-RELATED"/>
    <property type="match status" value="1"/>
</dbReference>
<dbReference type="Pfam" id="PF04279">
    <property type="entry name" value="IspA"/>
    <property type="match status" value="1"/>
</dbReference>
<organism>
    <name type="scientific">Magnetococcus marinus (strain ATCC BAA-1437 / JCM 17883 / MC-1)</name>
    <dbReference type="NCBI Taxonomy" id="156889"/>
    <lineage>
        <taxon>Bacteria</taxon>
        <taxon>Pseudomonadati</taxon>
        <taxon>Pseudomonadota</taxon>
        <taxon>Alphaproteobacteria</taxon>
        <taxon>Magnetococcales</taxon>
        <taxon>Magnetococcaceae</taxon>
        <taxon>Magnetococcus</taxon>
    </lineage>
</organism>
<comment type="function">
    <text evidence="1">Plays a role in cell envelope biogenesis, maintenance of cell envelope integrity and membrane homeostasis.</text>
</comment>
<comment type="subcellular location">
    <subcellularLocation>
        <location evidence="1">Cell inner membrane</location>
        <topology evidence="1">Multi-pass membrane protein</topology>
    </subcellularLocation>
</comment>
<comment type="similarity">
    <text evidence="1">Belongs to the YciB family.</text>
</comment>
<sequence>MRFALELLAIVVFFVVYKLDGIYSATAALIIMVLLNVFYHWFKHRHVPSMMWITLILVMLFGGATLIFHDPLFIKWKPSILQWVLASGFLASHLIGKRVLVARMLDNQISMPSLHWRRLNAAWVLFLLFSGALNLYVAYTFSEEIWVSFKLFGLMGLTILFLIGQAFYMSRHGSEVRVEERKEGMIEAEETVENRPE</sequence>
<reference key="1">
    <citation type="journal article" date="2009" name="Appl. Environ. Microbiol.">
        <title>Complete genome sequence of the chemolithoautotrophic marine magnetotactic coccus strain MC-1.</title>
        <authorList>
            <person name="Schubbe S."/>
            <person name="Williams T.J."/>
            <person name="Xie G."/>
            <person name="Kiss H.E."/>
            <person name="Brettin T.S."/>
            <person name="Martinez D."/>
            <person name="Ross C.A."/>
            <person name="Schuler D."/>
            <person name="Cox B.L."/>
            <person name="Nealson K.H."/>
            <person name="Bazylinski D.A."/>
        </authorList>
    </citation>
    <scope>NUCLEOTIDE SEQUENCE [LARGE SCALE GENOMIC DNA]</scope>
    <source>
        <strain>ATCC BAA-1437 / JCM 17883 / MC-1</strain>
    </source>
</reference>
<feature type="chain" id="PRO_1000021027" description="Inner membrane-spanning protein YciB">
    <location>
        <begin position="1"/>
        <end position="197"/>
    </location>
</feature>
<feature type="transmembrane region" description="Helical" evidence="1">
    <location>
        <begin position="22"/>
        <end position="42"/>
    </location>
</feature>
<feature type="transmembrane region" description="Helical" evidence="1">
    <location>
        <begin position="48"/>
        <end position="68"/>
    </location>
</feature>
<feature type="transmembrane region" description="Helical" evidence="1">
    <location>
        <begin position="76"/>
        <end position="96"/>
    </location>
</feature>
<feature type="transmembrane region" description="Helical" evidence="1">
    <location>
        <begin position="121"/>
        <end position="141"/>
    </location>
</feature>
<feature type="transmembrane region" description="Helical" evidence="1">
    <location>
        <begin position="144"/>
        <end position="164"/>
    </location>
</feature>